<name>HIS8_VESOH</name>
<gene>
    <name evidence="1" type="primary">hisC</name>
    <name type="ordered locus">COSY_0853</name>
</gene>
<proteinExistence type="inferred from homology"/>
<reference key="1">
    <citation type="journal article" date="2007" name="Curr. Biol.">
        <title>Reduced genome of the thioautotrophic intracellular symbiont in a deep-sea clam, Calyptogena okutanii.</title>
        <authorList>
            <person name="Kuwahara H."/>
            <person name="Yoshida T."/>
            <person name="Takaki Y."/>
            <person name="Shimamura S."/>
            <person name="Nishi S."/>
            <person name="Harada M."/>
            <person name="Matsuyama K."/>
            <person name="Takishita K."/>
            <person name="Kawato M."/>
            <person name="Uematsu K."/>
            <person name="Fujiwara Y."/>
            <person name="Sato T."/>
            <person name="Kato C."/>
            <person name="Kitagawa M."/>
            <person name="Kato I."/>
            <person name="Maruyama T."/>
        </authorList>
    </citation>
    <scope>NUCLEOTIDE SEQUENCE [LARGE SCALE GENOMIC DNA]</scope>
    <source>
        <strain>HA</strain>
    </source>
</reference>
<keyword id="KW-0028">Amino-acid biosynthesis</keyword>
<keyword id="KW-0032">Aminotransferase</keyword>
<keyword id="KW-0368">Histidine biosynthesis</keyword>
<keyword id="KW-0663">Pyridoxal phosphate</keyword>
<keyword id="KW-1185">Reference proteome</keyword>
<keyword id="KW-0808">Transferase</keyword>
<protein>
    <recommendedName>
        <fullName evidence="1">Histidinol-phosphate aminotransferase</fullName>
        <ecNumber evidence="1">2.6.1.9</ecNumber>
    </recommendedName>
    <alternativeName>
        <fullName evidence="1">Imidazole acetol-phosphate transaminase</fullName>
    </alternativeName>
</protein>
<feature type="chain" id="PRO_0000319794" description="Histidinol-phosphate aminotransferase">
    <location>
        <begin position="1"/>
        <end position="354"/>
    </location>
</feature>
<feature type="modified residue" description="N6-(pyridoxal phosphate)lysine" evidence="1">
    <location>
        <position position="215"/>
    </location>
</feature>
<sequence>MSFINSWLRSDIKMINAYHVPISADMVKMDAMESPFSLSDELTDQYLTYLVDAQLNRYPSPSSDKLNQTLRLLMNIPKEFGVLLGNGSDELIQLLALACNTGDTVLSVEPSFVMYGMITKFTRLNYQSVLLTDDFEIDDDTMQKAIKTYNPKLIFIAYPNNPTGNMFNREIIEHIISSTKAMVVLDEAYYAYTTDSFLTDIAKYPNLVLLRTVSKIGFAGLRLGLLIATQDTVNQLNKLRLPYNINILTQVSANFLLQEKNTINANVSVILAQRQVLFDALVKINVLKVYPSQANFILFKAPNTNILFDFLKENGVLIKNLSVKKKLINCLRVTIGTEEQNQKFINIVEKFYIL</sequence>
<accession>A5CVR5</accession>
<organism>
    <name type="scientific">Vesicomyosocius okutanii subsp. Calyptogena okutanii (strain HA)</name>
    <dbReference type="NCBI Taxonomy" id="412965"/>
    <lineage>
        <taxon>Bacteria</taxon>
        <taxon>Pseudomonadati</taxon>
        <taxon>Pseudomonadota</taxon>
        <taxon>Gammaproteobacteria</taxon>
        <taxon>Candidatus Pseudothioglobaceae</taxon>
        <taxon>Candidatus Vesicomyosocius</taxon>
    </lineage>
</organism>
<dbReference type="EC" id="2.6.1.9" evidence="1"/>
<dbReference type="EMBL" id="AP009247">
    <property type="protein sequence ID" value="BAF61958.1"/>
    <property type="molecule type" value="Genomic_DNA"/>
</dbReference>
<dbReference type="RefSeq" id="WP_011930227.1">
    <property type="nucleotide sequence ID" value="NC_009465.1"/>
</dbReference>
<dbReference type="SMR" id="A5CVR5"/>
<dbReference type="STRING" id="412965.COSY_0853"/>
<dbReference type="KEGG" id="vok:COSY_0853"/>
<dbReference type="eggNOG" id="COG0079">
    <property type="taxonomic scope" value="Bacteria"/>
</dbReference>
<dbReference type="HOGENOM" id="CLU_017584_3_1_6"/>
<dbReference type="OrthoDB" id="9809616at2"/>
<dbReference type="UniPathway" id="UPA00031">
    <property type="reaction ID" value="UER00012"/>
</dbReference>
<dbReference type="Proteomes" id="UP000000247">
    <property type="component" value="Chromosome"/>
</dbReference>
<dbReference type="GO" id="GO:0004400">
    <property type="term" value="F:histidinol-phosphate transaminase activity"/>
    <property type="evidence" value="ECO:0007669"/>
    <property type="project" value="UniProtKB-UniRule"/>
</dbReference>
<dbReference type="GO" id="GO:0030170">
    <property type="term" value="F:pyridoxal phosphate binding"/>
    <property type="evidence" value="ECO:0007669"/>
    <property type="project" value="InterPro"/>
</dbReference>
<dbReference type="GO" id="GO:0000105">
    <property type="term" value="P:L-histidine biosynthetic process"/>
    <property type="evidence" value="ECO:0007669"/>
    <property type="project" value="UniProtKB-UniRule"/>
</dbReference>
<dbReference type="CDD" id="cd00609">
    <property type="entry name" value="AAT_like"/>
    <property type="match status" value="1"/>
</dbReference>
<dbReference type="Gene3D" id="3.90.1150.10">
    <property type="entry name" value="Aspartate Aminotransferase, domain 1"/>
    <property type="match status" value="1"/>
</dbReference>
<dbReference type="Gene3D" id="3.40.640.10">
    <property type="entry name" value="Type I PLP-dependent aspartate aminotransferase-like (Major domain)"/>
    <property type="match status" value="1"/>
</dbReference>
<dbReference type="HAMAP" id="MF_01023">
    <property type="entry name" value="HisC_aminotrans_2"/>
    <property type="match status" value="1"/>
</dbReference>
<dbReference type="InterPro" id="IPR004839">
    <property type="entry name" value="Aminotransferase_I/II_large"/>
</dbReference>
<dbReference type="InterPro" id="IPR005861">
    <property type="entry name" value="HisP_aminotrans"/>
</dbReference>
<dbReference type="InterPro" id="IPR050106">
    <property type="entry name" value="HistidinolP_aminotransfase"/>
</dbReference>
<dbReference type="InterPro" id="IPR015424">
    <property type="entry name" value="PyrdxlP-dep_Trfase"/>
</dbReference>
<dbReference type="InterPro" id="IPR015421">
    <property type="entry name" value="PyrdxlP-dep_Trfase_major"/>
</dbReference>
<dbReference type="InterPro" id="IPR015422">
    <property type="entry name" value="PyrdxlP-dep_Trfase_small"/>
</dbReference>
<dbReference type="NCBIfam" id="TIGR01141">
    <property type="entry name" value="hisC"/>
    <property type="match status" value="1"/>
</dbReference>
<dbReference type="PANTHER" id="PTHR43643:SF6">
    <property type="entry name" value="HISTIDINOL-PHOSPHATE AMINOTRANSFERASE"/>
    <property type="match status" value="1"/>
</dbReference>
<dbReference type="PANTHER" id="PTHR43643">
    <property type="entry name" value="HISTIDINOL-PHOSPHATE AMINOTRANSFERASE 2"/>
    <property type="match status" value="1"/>
</dbReference>
<dbReference type="Pfam" id="PF00155">
    <property type="entry name" value="Aminotran_1_2"/>
    <property type="match status" value="1"/>
</dbReference>
<dbReference type="SUPFAM" id="SSF53383">
    <property type="entry name" value="PLP-dependent transferases"/>
    <property type="match status" value="1"/>
</dbReference>
<comment type="catalytic activity">
    <reaction evidence="1">
        <text>L-histidinol phosphate + 2-oxoglutarate = 3-(imidazol-4-yl)-2-oxopropyl phosphate + L-glutamate</text>
        <dbReference type="Rhea" id="RHEA:23744"/>
        <dbReference type="ChEBI" id="CHEBI:16810"/>
        <dbReference type="ChEBI" id="CHEBI:29985"/>
        <dbReference type="ChEBI" id="CHEBI:57766"/>
        <dbReference type="ChEBI" id="CHEBI:57980"/>
        <dbReference type="EC" id="2.6.1.9"/>
    </reaction>
</comment>
<comment type="cofactor">
    <cofactor evidence="1">
        <name>pyridoxal 5'-phosphate</name>
        <dbReference type="ChEBI" id="CHEBI:597326"/>
    </cofactor>
</comment>
<comment type="pathway">
    <text evidence="1">Amino-acid biosynthesis; L-histidine biosynthesis; L-histidine from 5-phospho-alpha-D-ribose 1-diphosphate: step 7/9.</text>
</comment>
<comment type="subunit">
    <text evidence="1">Homodimer.</text>
</comment>
<comment type="similarity">
    <text evidence="1">Belongs to the class-II pyridoxal-phosphate-dependent aminotransferase family. Histidinol-phosphate aminotransferase subfamily.</text>
</comment>
<evidence type="ECO:0000255" key="1">
    <source>
        <dbReference type="HAMAP-Rule" id="MF_01023"/>
    </source>
</evidence>